<organism>
    <name type="scientific">Aliivibrio fischeri (strain ATCC 700601 / ES114)</name>
    <name type="common">Vibrio fischeri</name>
    <dbReference type="NCBI Taxonomy" id="312309"/>
    <lineage>
        <taxon>Bacteria</taxon>
        <taxon>Pseudomonadati</taxon>
        <taxon>Pseudomonadota</taxon>
        <taxon>Gammaproteobacteria</taxon>
        <taxon>Vibrionales</taxon>
        <taxon>Vibrionaceae</taxon>
        <taxon>Aliivibrio</taxon>
    </lineage>
</organism>
<comment type="function">
    <text evidence="1">DNA-dependent RNA polymerase catalyzes the transcription of DNA into RNA using the four ribonucleoside triphosphates as substrates.</text>
</comment>
<comment type="catalytic activity">
    <reaction evidence="1">
        <text>RNA(n) + a ribonucleoside 5'-triphosphate = RNA(n+1) + diphosphate</text>
        <dbReference type="Rhea" id="RHEA:21248"/>
        <dbReference type="Rhea" id="RHEA-COMP:14527"/>
        <dbReference type="Rhea" id="RHEA-COMP:17342"/>
        <dbReference type="ChEBI" id="CHEBI:33019"/>
        <dbReference type="ChEBI" id="CHEBI:61557"/>
        <dbReference type="ChEBI" id="CHEBI:140395"/>
        <dbReference type="EC" id="2.7.7.6"/>
    </reaction>
</comment>
<comment type="subunit">
    <text evidence="1">Homodimer. The RNAP catalytic core consists of 2 alpha, 1 beta, 1 beta' and 1 omega subunit. When a sigma factor is associated with the core the holoenzyme is formed, which can initiate transcription.</text>
</comment>
<comment type="domain">
    <text evidence="1">The N-terminal domain is essential for RNAP assembly and basal transcription, whereas the C-terminal domain is involved in interaction with transcriptional regulators and with upstream promoter elements.</text>
</comment>
<comment type="similarity">
    <text evidence="1">Belongs to the RNA polymerase alpha chain family.</text>
</comment>
<keyword id="KW-0240">DNA-directed RNA polymerase</keyword>
<keyword id="KW-0548">Nucleotidyltransferase</keyword>
<keyword id="KW-1185">Reference proteome</keyword>
<keyword id="KW-0804">Transcription</keyword>
<keyword id="KW-0808">Transferase</keyword>
<feature type="chain" id="PRO_0000225311" description="DNA-directed RNA polymerase subunit alpha">
    <location>
        <begin position="1"/>
        <end position="329"/>
    </location>
</feature>
<feature type="region of interest" description="Alpha N-terminal domain (alpha-NTD)" evidence="1">
    <location>
        <begin position="1"/>
        <end position="235"/>
    </location>
</feature>
<feature type="region of interest" description="Alpha C-terminal domain (alpha-CTD)" evidence="1">
    <location>
        <begin position="249"/>
        <end position="329"/>
    </location>
</feature>
<reference key="1">
    <citation type="journal article" date="2005" name="Proc. Natl. Acad. Sci. U.S.A.">
        <title>Complete genome sequence of Vibrio fischeri: a symbiotic bacterium with pathogenic congeners.</title>
        <authorList>
            <person name="Ruby E.G."/>
            <person name="Urbanowski M."/>
            <person name="Campbell J."/>
            <person name="Dunn A."/>
            <person name="Faini M."/>
            <person name="Gunsalus R."/>
            <person name="Lostroh P."/>
            <person name="Lupp C."/>
            <person name="McCann J."/>
            <person name="Millikan D."/>
            <person name="Schaefer A."/>
            <person name="Stabb E."/>
            <person name="Stevens A."/>
            <person name="Visick K."/>
            <person name="Whistler C."/>
            <person name="Greenberg E.P."/>
        </authorList>
    </citation>
    <scope>NUCLEOTIDE SEQUENCE [LARGE SCALE GENOMIC DNA]</scope>
    <source>
        <strain>ATCC 700601 / ES114</strain>
    </source>
</reference>
<gene>
    <name evidence="1" type="primary">rpoA</name>
    <name type="ordered locus">VF_0262</name>
</gene>
<accession>Q5E889</accession>
<name>RPOA_ALIF1</name>
<evidence type="ECO:0000255" key="1">
    <source>
        <dbReference type="HAMAP-Rule" id="MF_00059"/>
    </source>
</evidence>
<protein>
    <recommendedName>
        <fullName evidence="1">DNA-directed RNA polymerase subunit alpha</fullName>
        <shortName evidence="1">RNAP subunit alpha</shortName>
        <ecNumber evidence="1">2.7.7.6</ecNumber>
    </recommendedName>
    <alternativeName>
        <fullName evidence="1">RNA polymerase subunit alpha</fullName>
    </alternativeName>
    <alternativeName>
        <fullName evidence="1">Transcriptase subunit alpha</fullName>
    </alternativeName>
</protein>
<dbReference type="EC" id="2.7.7.6" evidence="1"/>
<dbReference type="EMBL" id="CP000020">
    <property type="protein sequence ID" value="AAW84757.1"/>
    <property type="molecule type" value="Genomic_DNA"/>
</dbReference>
<dbReference type="RefSeq" id="WP_005417271.1">
    <property type="nucleotide sequence ID" value="NZ_CAWLES010000001.1"/>
</dbReference>
<dbReference type="RefSeq" id="YP_203645.1">
    <property type="nucleotide sequence ID" value="NC_006840.2"/>
</dbReference>
<dbReference type="SMR" id="Q5E889"/>
<dbReference type="STRING" id="312309.VF_0262"/>
<dbReference type="EnsemblBacteria" id="AAW84757">
    <property type="protein sequence ID" value="AAW84757"/>
    <property type="gene ID" value="VF_0262"/>
</dbReference>
<dbReference type="GeneID" id="54162883"/>
<dbReference type="KEGG" id="vfi:VF_0262"/>
<dbReference type="PATRIC" id="fig|312309.11.peg.257"/>
<dbReference type="eggNOG" id="COG0202">
    <property type="taxonomic scope" value="Bacteria"/>
</dbReference>
<dbReference type="HOGENOM" id="CLU_053084_0_0_6"/>
<dbReference type="OrthoDB" id="9805706at2"/>
<dbReference type="Proteomes" id="UP000000537">
    <property type="component" value="Chromosome I"/>
</dbReference>
<dbReference type="GO" id="GO:0005737">
    <property type="term" value="C:cytoplasm"/>
    <property type="evidence" value="ECO:0007669"/>
    <property type="project" value="UniProtKB-ARBA"/>
</dbReference>
<dbReference type="GO" id="GO:0000428">
    <property type="term" value="C:DNA-directed RNA polymerase complex"/>
    <property type="evidence" value="ECO:0007669"/>
    <property type="project" value="UniProtKB-KW"/>
</dbReference>
<dbReference type="GO" id="GO:0003677">
    <property type="term" value="F:DNA binding"/>
    <property type="evidence" value="ECO:0007669"/>
    <property type="project" value="UniProtKB-UniRule"/>
</dbReference>
<dbReference type="GO" id="GO:0003899">
    <property type="term" value="F:DNA-directed RNA polymerase activity"/>
    <property type="evidence" value="ECO:0007669"/>
    <property type="project" value="UniProtKB-UniRule"/>
</dbReference>
<dbReference type="GO" id="GO:0046983">
    <property type="term" value="F:protein dimerization activity"/>
    <property type="evidence" value="ECO:0007669"/>
    <property type="project" value="InterPro"/>
</dbReference>
<dbReference type="GO" id="GO:0006351">
    <property type="term" value="P:DNA-templated transcription"/>
    <property type="evidence" value="ECO:0007669"/>
    <property type="project" value="UniProtKB-UniRule"/>
</dbReference>
<dbReference type="CDD" id="cd06928">
    <property type="entry name" value="RNAP_alpha_NTD"/>
    <property type="match status" value="1"/>
</dbReference>
<dbReference type="FunFam" id="1.10.150.20:FF:000001">
    <property type="entry name" value="DNA-directed RNA polymerase subunit alpha"/>
    <property type="match status" value="1"/>
</dbReference>
<dbReference type="FunFam" id="2.170.120.12:FF:000001">
    <property type="entry name" value="DNA-directed RNA polymerase subunit alpha"/>
    <property type="match status" value="1"/>
</dbReference>
<dbReference type="Gene3D" id="1.10.150.20">
    <property type="entry name" value="5' to 3' exonuclease, C-terminal subdomain"/>
    <property type="match status" value="1"/>
</dbReference>
<dbReference type="Gene3D" id="2.170.120.12">
    <property type="entry name" value="DNA-directed RNA polymerase, insert domain"/>
    <property type="match status" value="1"/>
</dbReference>
<dbReference type="Gene3D" id="3.30.1360.10">
    <property type="entry name" value="RNA polymerase, RBP11-like subunit"/>
    <property type="match status" value="1"/>
</dbReference>
<dbReference type="HAMAP" id="MF_00059">
    <property type="entry name" value="RNApol_bact_RpoA"/>
    <property type="match status" value="1"/>
</dbReference>
<dbReference type="InterPro" id="IPR011262">
    <property type="entry name" value="DNA-dir_RNA_pol_insert"/>
</dbReference>
<dbReference type="InterPro" id="IPR011263">
    <property type="entry name" value="DNA-dir_RNA_pol_RpoA/D/Rpb3"/>
</dbReference>
<dbReference type="InterPro" id="IPR011773">
    <property type="entry name" value="DNA-dir_RpoA"/>
</dbReference>
<dbReference type="InterPro" id="IPR036603">
    <property type="entry name" value="RBP11-like"/>
</dbReference>
<dbReference type="InterPro" id="IPR011260">
    <property type="entry name" value="RNAP_asu_C"/>
</dbReference>
<dbReference type="InterPro" id="IPR036643">
    <property type="entry name" value="RNApol_insert_sf"/>
</dbReference>
<dbReference type="NCBIfam" id="NF003513">
    <property type="entry name" value="PRK05182.1-2"/>
    <property type="match status" value="1"/>
</dbReference>
<dbReference type="NCBIfam" id="NF003519">
    <property type="entry name" value="PRK05182.2-5"/>
    <property type="match status" value="1"/>
</dbReference>
<dbReference type="NCBIfam" id="TIGR02027">
    <property type="entry name" value="rpoA"/>
    <property type="match status" value="1"/>
</dbReference>
<dbReference type="Pfam" id="PF01000">
    <property type="entry name" value="RNA_pol_A_bac"/>
    <property type="match status" value="1"/>
</dbReference>
<dbReference type="Pfam" id="PF03118">
    <property type="entry name" value="RNA_pol_A_CTD"/>
    <property type="match status" value="1"/>
</dbReference>
<dbReference type="Pfam" id="PF01193">
    <property type="entry name" value="RNA_pol_L"/>
    <property type="match status" value="1"/>
</dbReference>
<dbReference type="SMART" id="SM00662">
    <property type="entry name" value="RPOLD"/>
    <property type="match status" value="1"/>
</dbReference>
<dbReference type="SUPFAM" id="SSF47789">
    <property type="entry name" value="C-terminal domain of RNA polymerase alpha subunit"/>
    <property type="match status" value="1"/>
</dbReference>
<dbReference type="SUPFAM" id="SSF56553">
    <property type="entry name" value="Insert subdomain of RNA polymerase alpha subunit"/>
    <property type="match status" value="1"/>
</dbReference>
<dbReference type="SUPFAM" id="SSF55257">
    <property type="entry name" value="RBP11-like subunits of RNA polymerase"/>
    <property type="match status" value="1"/>
</dbReference>
<proteinExistence type="inferred from homology"/>
<sequence>MQGSVTEFLKPRLVDIEQVSTTHAKVTLEPLERGFGHTLGNALRRILLSSMPGCAVTEVEIEGVLHEYSTKEGVQEDILEILLNLKGLAVKVEGKDEVIITLNKSGAGPVVAGDITHDGDVEIANPEHVICHLTDDNAEISMRIKVERGRGYVPSTARIHTEEDERPIGRLLVDATYSPVDKISYAVEAARVEQRTDLDKLVIDMETNGTLDPEEAIRRAATILAEQLDAFVDLRDVRVPEEKEEKPEFDPILLRPVDDLELTVRSANCLKAEAIHYIGDLVQRTEVELLKTPNLGKKSLTEIKDVLASRGLSLGMRLENWPPASIAED</sequence>